<reference key="1">
    <citation type="journal article" date="2007" name="J. Bacteriol.">
        <title>Genome of the opportunistic pathogen Streptococcus sanguinis.</title>
        <authorList>
            <person name="Xu P."/>
            <person name="Alves J.M."/>
            <person name="Kitten T."/>
            <person name="Brown A."/>
            <person name="Chen Z."/>
            <person name="Ozaki L.S."/>
            <person name="Manque P."/>
            <person name="Ge X."/>
            <person name="Serrano M.G."/>
            <person name="Puiu D."/>
            <person name="Hendricks S."/>
            <person name="Wang Y."/>
            <person name="Chaplin M.D."/>
            <person name="Akan D."/>
            <person name="Paik S."/>
            <person name="Peterson D.L."/>
            <person name="Macrina F.L."/>
            <person name="Buck G.A."/>
        </authorList>
    </citation>
    <scope>NUCLEOTIDE SEQUENCE [LARGE SCALE GENOMIC DNA]</scope>
    <source>
        <strain>SK36</strain>
    </source>
</reference>
<sequence length="332" mass="37313">MSRILDNELMGDEELVERTLRPQYLQEYIGQDKVKDQLKIFIEAAKLRDEALDHTLLFGPPGLGKTTMAFVIANELGVNLKQTSGPVIEKSGDLVAILNDLEPGDVLFIDEIHRLPMAVEEVLYSAMEDFYIDIMIGSGETSRSVHLDLPPFTLIGATTRAGMLSNPLRARFGITGHMEYYEAGDLTEIVERTAEIFEMAITHEAAKELALRSRGTPRIANRLLKRVRDYAQIMGNGLIDDKITDQALSMLDVDQEGLDYVDQKILKTMIEVYGGGPVGLGTLSVNIAEERETVEDMYEPYLIQKGFVMRTRTGRVATRKAYEHLGYEYMKE</sequence>
<protein>
    <recommendedName>
        <fullName evidence="1">Holliday junction branch migration complex subunit RuvB</fullName>
        <ecNumber evidence="1">3.6.4.-</ecNumber>
    </recommendedName>
</protein>
<name>RUVB_STRSV</name>
<organism>
    <name type="scientific">Streptococcus sanguinis (strain SK36)</name>
    <dbReference type="NCBI Taxonomy" id="388919"/>
    <lineage>
        <taxon>Bacteria</taxon>
        <taxon>Bacillati</taxon>
        <taxon>Bacillota</taxon>
        <taxon>Bacilli</taxon>
        <taxon>Lactobacillales</taxon>
        <taxon>Streptococcaceae</taxon>
        <taxon>Streptococcus</taxon>
    </lineage>
</organism>
<keyword id="KW-0067">ATP-binding</keyword>
<keyword id="KW-0963">Cytoplasm</keyword>
<keyword id="KW-0227">DNA damage</keyword>
<keyword id="KW-0233">DNA recombination</keyword>
<keyword id="KW-0234">DNA repair</keyword>
<keyword id="KW-0238">DNA-binding</keyword>
<keyword id="KW-0378">Hydrolase</keyword>
<keyword id="KW-0547">Nucleotide-binding</keyword>
<keyword id="KW-1185">Reference proteome</keyword>
<proteinExistence type="inferred from homology"/>
<accession>A3CK22</accession>
<dbReference type="EC" id="3.6.4.-" evidence="1"/>
<dbReference type="EMBL" id="CP000387">
    <property type="protein sequence ID" value="ABN43527.1"/>
    <property type="molecule type" value="Genomic_DNA"/>
</dbReference>
<dbReference type="RefSeq" id="WP_002908428.1">
    <property type="nucleotide sequence ID" value="NC_009009.1"/>
</dbReference>
<dbReference type="RefSeq" id="YP_001034077.1">
    <property type="nucleotide sequence ID" value="NC_009009.1"/>
</dbReference>
<dbReference type="SMR" id="A3CK22"/>
<dbReference type="STRING" id="388919.SSA_0063"/>
<dbReference type="GeneID" id="48424539"/>
<dbReference type="KEGG" id="ssa:SSA_0063"/>
<dbReference type="PATRIC" id="fig|388919.9.peg.59"/>
<dbReference type="eggNOG" id="COG2255">
    <property type="taxonomic scope" value="Bacteria"/>
</dbReference>
<dbReference type="HOGENOM" id="CLU_055599_1_0_9"/>
<dbReference type="OrthoDB" id="9804478at2"/>
<dbReference type="Proteomes" id="UP000002148">
    <property type="component" value="Chromosome"/>
</dbReference>
<dbReference type="GO" id="GO:0005737">
    <property type="term" value="C:cytoplasm"/>
    <property type="evidence" value="ECO:0007669"/>
    <property type="project" value="UniProtKB-SubCell"/>
</dbReference>
<dbReference type="GO" id="GO:0048476">
    <property type="term" value="C:Holliday junction resolvase complex"/>
    <property type="evidence" value="ECO:0007669"/>
    <property type="project" value="UniProtKB-UniRule"/>
</dbReference>
<dbReference type="GO" id="GO:0005524">
    <property type="term" value="F:ATP binding"/>
    <property type="evidence" value="ECO:0007669"/>
    <property type="project" value="UniProtKB-UniRule"/>
</dbReference>
<dbReference type="GO" id="GO:0016887">
    <property type="term" value="F:ATP hydrolysis activity"/>
    <property type="evidence" value="ECO:0007669"/>
    <property type="project" value="InterPro"/>
</dbReference>
<dbReference type="GO" id="GO:0000400">
    <property type="term" value="F:four-way junction DNA binding"/>
    <property type="evidence" value="ECO:0007669"/>
    <property type="project" value="UniProtKB-UniRule"/>
</dbReference>
<dbReference type="GO" id="GO:0009378">
    <property type="term" value="F:four-way junction helicase activity"/>
    <property type="evidence" value="ECO:0007669"/>
    <property type="project" value="InterPro"/>
</dbReference>
<dbReference type="GO" id="GO:0006310">
    <property type="term" value="P:DNA recombination"/>
    <property type="evidence" value="ECO:0007669"/>
    <property type="project" value="UniProtKB-UniRule"/>
</dbReference>
<dbReference type="GO" id="GO:0006281">
    <property type="term" value="P:DNA repair"/>
    <property type="evidence" value="ECO:0007669"/>
    <property type="project" value="UniProtKB-UniRule"/>
</dbReference>
<dbReference type="CDD" id="cd00009">
    <property type="entry name" value="AAA"/>
    <property type="match status" value="1"/>
</dbReference>
<dbReference type="Gene3D" id="1.10.8.60">
    <property type="match status" value="1"/>
</dbReference>
<dbReference type="Gene3D" id="3.40.50.300">
    <property type="entry name" value="P-loop containing nucleotide triphosphate hydrolases"/>
    <property type="match status" value="1"/>
</dbReference>
<dbReference type="Gene3D" id="1.10.10.10">
    <property type="entry name" value="Winged helix-like DNA-binding domain superfamily/Winged helix DNA-binding domain"/>
    <property type="match status" value="1"/>
</dbReference>
<dbReference type="HAMAP" id="MF_00016">
    <property type="entry name" value="DNA_HJ_migration_RuvB"/>
    <property type="match status" value="1"/>
</dbReference>
<dbReference type="InterPro" id="IPR003593">
    <property type="entry name" value="AAA+_ATPase"/>
</dbReference>
<dbReference type="InterPro" id="IPR041445">
    <property type="entry name" value="AAA_lid_4"/>
</dbReference>
<dbReference type="InterPro" id="IPR004605">
    <property type="entry name" value="DNA_helicase_Holl-junc_RuvB"/>
</dbReference>
<dbReference type="InterPro" id="IPR027417">
    <property type="entry name" value="P-loop_NTPase"/>
</dbReference>
<dbReference type="InterPro" id="IPR008824">
    <property type="entry name" value="RuvB-like_N"/>
</dbReference>
<dbReference type="InterPro" id="IPR008823">
    <property type="entry name" value="RuvB_C"/>
</dbReference>
<dbReference type="InterPro" id="IPR036388">
    <property type="entry name" value="WH-like_DNA-bd_sf"/>
</dbReference>
<dbReference type="InterPro" id="IPR036390">
    <property type="entry name" value="WH_DNA-bd_sf"/>
</dbReference>
<dbReference type="NCBIfam" id="NF000868">
    <property type="entry name" value="PRK00080.1"/>
    <property type="match status" value="1"/>
</dbReference>
<dbReference type="NCBIfam" id="TIGR00635">
    <property type="entry name" value="ruvB"/>
    <property type="match status" value="1"/>
</dbReference>
<dbReference type="PANTHER" id="PTHR42848">
    <property type="match status" value="1"/>
</dbReference>
<dbReference type="PANTHER" id="PTHR42848:SF1">
    <property type="entry name" value="HOLLIDAY JUNCTION BRANCH MIGRATION COMPLEX SUBUNIT RUVB"/>
    <property type="match status" value="1"/>
</dbReference>
<dbReference type="Pfam" id="PF17864">
    <property type="entry name" value="AAA_lid_4"/>
    <property type="match status" value="1"/>
</dbReference>
<dbReference type="Pfam" id="PF05491">
    <property type="entry name" value="RuvB_C"/>
    <property type="match status" value="1"/>
</dbReference>
<dbReference type="Pfam" id="PF05496">
    <property type="entry name" value="RuvB_N"/>
    <property type="match status" value="1"/>
</dbReference>
<dbReference type="SMART" id="SM00382">
    <property type="entry name" value="AAA"/>
    <property type="match status" value="1"/>
</dbReference>
<dbReference type="SUPFAM" id="SSF52540">
    <property type="entry name" value="P-loop containing nucleoside triphosphate hydrolases"/>
    <property type="match status" value="1"/>
</dbReference>
<dbReference type="SUPFAM" id="SSF46785">
    <property type="entry name" value="Winged helix' DNA-binding domain"/>
    <property type="match status" value="1"/>
</dbReference>
<gene>
    <name evidence="1" type="primary">ruvB</name>
    <name type="ordered locus">SSA_0063</name>
</gene>
<comment type="function">
    <text evidence="1">The RuvA-RuvB-RuvC complex processes Holliday junction (HJ) DNA during genetic recombination and DNA repair, while the RuvA-RuvB complex plays an important role in the rescue of blocked DNA replication forks via replication fork reversal (RFR). RuvA specifically binds to HJ cruciform DNA, conferring on it an open structure. The RuvB hexamer acts as an ATP-dependent pump, pulling dsDNA into and through the RuvAB complex. RuvB forms 2 homohexamers on either side of HJ DNA bound by 1 or 2 RuvA tetramers; 4 subunits per hexamer contact DNA at a time. Coordinated motions by a converter formed by DNA-disengaged RuvB subunits stimulates ATP hydrolysis and nucleotide exchange. Immobilization of the converter enables RuvB to convert the ATP-contained energy into a lever motion, pulling 2 nucleotides of DNA out of the RuvA tetramer per ATP hydrolyzed, thus driving DNA branch migration. The RuvB motors rotate together with the DNA substrate, which together with the progressing nucleotide cycle form the mechanistic basis for DNA recombination by continuous HJ branch migration. Branch migration allows RuvC to scan DNA until it finds its consensus sequence, where it cleaves and resolves cruciform DNA.</text>
</comment>
<comment type="catalytic activity">
    <reaction evidence="1">
        <text>ATP + H2O = ADP + phosphate + H(+)</text>
        <dbReference type="Rhea" id="RHEA:13065"/>
        <dbReference type="ChEBI" id="CHEBI:15377"/>
        <dbReference type="ChEBI" id="CHEBI:15378"/>
        <dbReference type="ChEBI" id="CHEBI:30616"/>
        <dbReference type="ChEBI" id="CHEBI:43474"/>
        <dbReference type="ChEBI" id="CHEBI:456216"/>
    </reaction>
</comment>
<comment type="subunit">
    <text evidence="1">Homohexamer. Forms an RuvA(8)-RuvB(12)-Holliday junction (HJ) complex. HJ DNA is sandwiched between 2 RuvA tetramers; dsDNA enters through RuvA and exits via RuvB. An RuvB hexamer assembles on each DNA strand where it exits the tetramer. Each RuvB hexamer is contacted by two RuvA subunits (via domain III) on 2 adjacent RuvB subunits; this complex drives branch migration. In the full resolvosome a probable DNA-RuvA(4)-RuvB(12)-RuvC(2) complex forms which resolves the HJ.</text>
</comment>
<comment type="subcellular location">
    <subcellularLocation>
        <location evidence="1">Cytoplasm</location>
    </subcellularLocation>
</comment>
<comment type="domain">
    <text evidence="1">Has 3 domains, the large (RuvB-L) and small ATPase (RuvB-S) domains and the C-terminal head (RuvB-H) domain. The head domain binds DNA, while the ATPase domains jointly bind ATP, ADP or are empty depending on the state of the subunit in the translocation cycle. During a single DNA translocation step the structure of each domain remains the same, but their relative positions change.</text>
</comment>
<comment type="similarity">
    <text evidence="1">Belongs to the RuvB family.</text>
</comment>
<feature type="chain" id="PRO_1000001488" description="Holliday junction branch migration complex subunit RuvB">
    <location>
        <begin position="1"/>
        <end position="332"/>
    </location>
</feature>
<feature type="region of interest" description="Large ATPase domain (RuvB-L)" evidence="1">
    <location>
        <begin position="1"/>
        <end position="181"/>
    </location>
</feature>
<feature type="region of interest" description="Small ATPAse domain (RuvB-S)" evidence="1">
    <location>
        <begin position="182"/>
        <end position="252"/>
    </location>
</feature>
<feature type="region of interest" description="Head domain (RuvB-H)" evidence="1">
    <location>
        <begin position="255"/>
        <end position="332"/>
    </location>
</feature>
<feature type="binding site" evidence="1">
    <location>
        <position position="20"/>
    </location>
    <ligand>
        <name>ATP</name>
        <dbReference type="ChEBI" id="CHEBI:30616"/>
    </ligand>
</feature>
<feature type="binding site" evidence="1">
    <location>
        <position position="21"/>
    </location>
    <ligand>
        <name>ATP</name>
        <dbReference type="ChEBI" id="CHEBI:30616"/>
    </ligand>
</feature>
<feature type="binding site" evidence="1">
    <location>
        <position position="62"/>
    </location>
    <ligand>
        <name>ATP</name>
        <dbReference type="ChEBI" id="CHEBI:30616"/>
    </ligand>
</feature>
<feature type="binding site" evidence="1">
    <location>
        <position position="65"/>
    </location>
    <ligand>
        <name>ATP</name>
        <dbReference type="ChEBI" id="CHEBI:30616"/>
    </ligand>
</feature>
<feature type="binding site" evidence="1">
    <location>
        <position position="66"/>
    </location>
    <ligand>
        <name>ATP</name>
        <dbReference type="ChEBI" id="CHEBI:30616"/>
    </ligand>
</feature>
<feature type="binding site" evidence="1">
    <location>
        <position position="66"/>
    </location>
    <ligand>
        <name>Mg(2+)</name>
        <dbReference type="ChEBI" id="CHEBI:18420"/>
    </ligand>
</feature>
<feature type="binding site" evidence="1">
    <location>
        <position position="67"/>
    </location>
    <ligand>
        <name>ATP</name>
        <dbReference type="ChEBI" id="CHEBI:30616"/>
    </ligand>
</feature>
<feature type="binding site" evidence="1">
    <location>
        <begin position="128"/>
        <end position="130"/>
    </location>
    <ligand>
        <name>ATP</name>
        <dbReference type="ChEBI" id="CHEBI:30616"/>
    </ligand>
</feature>
<feature type="binding site" evidence="1">
    <location>
        <position position="171"/>
    </location>
    <ligand>
        <name>ATP</name>
        <dbReference type="ChEBI" id="CHEBI:30616"/>
    </ligand>
</feature>
<feature type="binding site" evidence="1">
    <location>
        <position position="181"/>
    </location>
    <ligand>
        <name>ATP</name>
        <dbReference type="ChEBI" id="CHEBI:30616"/>
    </ligand>
</feature>
<feature type="binding site" evidence="1">
    <location>
        <position position="218"/>
    </location>
    <ligand>
        <name>ATP</name>
        <dbReference type="ChEBI" id="CHEBI:30616"/>
    </ligand>
</feature>
<feature type="binding site" evidence="1">
    <location>
        <position position="291"/>
    </location>
    <ligand>
        <name>DNA</name>
        <dbReference type="ChEBI" id="CHEBI:16991"/>
    </ligand>
</feature>
<feature type="binding site" evidence="1">
    <location>
        <position position="310"/>
    </location>
    <ligand>
        <name>DNA</name>
        <dbReference type="ChEBI" id="CHEBI:16991"/>
    </ligand>
</feature>
<feature type="binding site" evidence="1">
    <location>
        <position position="312"/>
    </location>
    <ligand>
        <name>DNA</name>
        <dbReference type="ChEBI" id="CHEBI:16991"/>
    </ligand>
</feature>
<feature type="binding site" evidence="1">
    <location>
        <position position="315"/>
    </location>
    <ligand>
        <name>DNA</name>
        <dbReference type="ChEBI" id="CHEBI:16991"/>
    </ligand>
</feature>
<evidence type="ECO:0000255" key="1">
    <source>
        <dbReference type="HAMAP-Rule" id="MF_00016"/>
    </source>
</evidence>